<comment type="function">
    <text evidence="1">Encapsidates the genome, protecting it from nucleases. The encapsidated genomic RNA is termed the nucleocapsid (NC). Serves as template for viral transcription and replication. The increased presence of protein N in host cell does not seem to trigger the switch from transcription to replication as observed in other negative strain RNA viruses. Through the interaction with host IKBKE, strongly inhibits the phosphorylation and nuclear translocation of host IRF3, a protein involved in interferon activation pathway, leading to the inhibition of interferon-beta and IRF3-dependent promoters activation. Also encodes a functional 3'-5' exoribonuclease that degrades preferentially dsRNA substrates and thereby participates in the suppression of interferon induction.</text>
</comment>
<comment type="subunit">
    <text evidence="1">Homomultimerizes to form the nucleocapsid. Binds to viral genomic RNA. Interacts with glycoprotein G2. Interacts with protein Z; this interaction probably directs the encapsidated genome to budding sites. Interacts with protein L; this interaction does not interfere with Z-L interaction. Interacts with host IKBKE (via Protein kinase domain); the interaction inhibits IKBKE kinase activity.</text>
</comment>
<comment type="subcellular location">
    <subcellularLocation>
        <location evidence="1">Virion</location>
    </subcellularLocation>
    <subcellularLocation>
        <location evidence="1">Host cytoplasm</location>
    </subcellularLocation>
</comment>
<comment type="domain">
    <text evidence="1">The N-terminal region is important for the cap-binding activity while the C-terminal region contains the 3'-5' exoribonuclease activity. A CCHE zinc binding site is present in the C-terminal region and may thus contribute to the substrate binding and/or the specificity of the exonuclease activity.</text>
</comment>
<comment type="similarity">
    <text evidence="1">Belongs to the arenaviridae nucleocapsid protein family.</text>
</comment>
<reference key="1">
    <citation type="journal article" date="1984" name="J. Virol.">
        <title>Sequencing studies of pichinde arenavirus S RNA indicate a novel coding strategy, an ambisense viral S RNA.</title>
        <authorList>
            <person name="Auperin D.D."/>
            <person name="Romanowski V."/>
            <person name="Galinski M."/>
            <person name="Bishop D.H.L."/>
        </authorList>
    </citation>
    <scope>NUCLEOTIDE SEQUENCE [GENOMIC RNA]</scope>
</reference>
<reference key="2">
    <citation type="journal article" date="1984" name="Virology">
        <title>The sequences of the N protein gene and intergenic region of the S RNA of pichinde arenavirus.</title>
        <authorList>
            <person name="Auperin D.D."/>
            <person name="Galinski M."/>
            <person name="Bishop D.H.L."/>
        </authorList>
    </citation>
    <scope>NUCLEOTIDE SEQUENCE [GENOMIC RNA]</scope>
</reference>
<reference key="3">
    <citation type="journal article" date="1987" name="Curr. Top. Microbiol. Immunol.">
        <title>Arenavirus gene structure and organization.</title>
        <authorList>
            <person name="Bishop D.H.L."/>
            <person name="Auperin D.D."/>
        </authorList>
    </citation>
    <scope>NUCLEOTIDE SEQUENCE [GENOMIC RNA]</scope>
</reference>
<evidence type="ECO:0000255" key="1">
    <source>
        <dbReference type="HAMAP-Rule" id="MF_04085"/>
    </source>
</evidence>
<evidence type="ECO:0000256" key="2">
    <source>
        <dbReference type="SAM" id="MobiDB-lite"/>
    </source>
</evidence>
<proteinExistence type="evidence at protein level"/>
<accession>P03541</accession>
<sequence>MSDNIPSFRWVQSLRRGLSNWTHPVKADVLSDTRALLSALDFHKVAQVQRMVRKDKRTDSDLTKLRDMNKEVDALMNMRSVQRDNVLKVGGLAKEELMELASDLDKLRKKVTRTEGLSQPGVYEGNLTNTQLEQRAEILRSMGFANARPAGNRDGVVKVWDIKDNTLLINQFGSMPALTIACMTEQGGEQLNDVVQALSALGLLYTVKFPNMTDLEKLTQQHSALKIISHEPSALNISGYNLSLSAAVKAAACMIDGGNMLETIQVKPSMFSTLIKSLLQIKNREGMFVSTTPGQRNPYENLLYKICLSGDGWPYIGSRSQVQGRAWDNTTVDLDSKPSAIQPPVRNGGSPDLKQIPKEKEDTVVSSIQMLDPRATTWIDIEGTPNDPVEMAIYQPDTGNYIHCYRFPHDEKSFKEQSKYSHGLLLKDLADAQPGLISSIIRHLPQNMVFTAQGSDDIIRLFEMHGRRDLKVLDVKLSAEQARTFEDEIWERYNQLCTKHKGLVIKKKKKGAVQTTANPHCALLDTIMFDATVTGWVRDQKPMRCLPIDTLYRNNTDLINL</sequence>
<name>NCAP_PIARV</name>
<protein>
    <recommendedName>
        <fullName evidence="1">Nucleoprotein</fullName>
        <ecNumber evidence="1">3.1.13.-</ecNumber>
    </recommendedName>
    <alternativeName>
        <fullName evidence="1">Nucleocapsid protein</fullName>
    </alternativeName>
    <alternativeName>
        <fullName evidence="1">Protein N</fullName>
    </alternativeName>
</protein>
<keyword id="KW-0002">3D-structure</keyword>
<keyword id="KW-0167">Capsid protein</keyword>
<keyword id="KW-1139">Helical capsid protein</keyword>
<keyword id="KW-1035">Host cytoplasm</keyword>
<keyword id="KW-0945">Host-virus interaction</keyword>
<keyword id="KW-0378">Hydrolase</keyword>
<keyword id="KW-1224">Inhibition of host IKBKE by virus</keyword>
<keyword id="KW-1090">Inhibition of host innate immune response by virus</keyword>
<keyword id="KW-1113">Inhibition of host RLR pathway by virus</keyword>
<keyword id="KW-0922">Interferon antiviral system evasion</keyword>
<keyword id="KW-0464">Manganese</keyword>
<keyword id="KW-0479">Metal-binding</keyword>
<keyword id="KW-0687">Ribonucleoprotein</keyword>
<keyword id="KW-0694">RNA-binding</keyword>
<keyword id="KW-0899">Viral immunoevasion</keyword>
<keyword id="KW-0543">Viral nucleoprotein</keyword>
<keyword id="KW-0946">Virion</keyword>
<keyword id="KW-0862">Zinc</keyword>
<organismHost>
    <name type="scientific">Cavia cutleri</name>
    <name type="common">Guinea pig</name>
    <dbReference type="NCBI Taxonomy" id="10144"/>
</organismHost>
<organismHost>
    <name type="scientific">Homo sapiens</name>
    <name type="common">Human</name>
    <dbReference type="NCBI Taxonomy" id="9606"/>
</organismHost>
<organismHost>
    <name type="scientific">Nephelomys albigularis</name>
    <name type="common">Tomes's rice rat</name>
    <name type="synonym">Oryzomys albigularis</name>
    <dbReference type="NCBI Taxonomy" id="530178"/>
</organismHost>
<organism>
    <name type="scientific">Pichinde mammarenavirus</name>
    <name type="common">PICV</name>
    <name type="synonym">Pichind mammarenavirus</name>
    <dbReference type="NCBI Taxonomy" id="3052300"/>
    <lineage>
        <taxon>Viruses</taxon>
        <taxon>Riboviria</taxon>
        <taxon>Orthornavirae</taxon>
        <taxon>Negarnaviricota</taxon>
        <taxon>Polyploviricotina</taxon>
        <taxon>Ellioviricetes</taxon>
        <taxon>Bunyavirales</taxon>
        <taxon>Arenaviridae</taxon>
        <taxon>Mammarenavirus</taxon>
    </lineage>
</organism>
<dbReference type="EC" id="3.1.13.-" evidence="1"/>
<dbReference type="EMBL" id="K02734">
    <property type="protein sequence ID" value="AAA46825.1"/>
    <property type="molecule type" value="Genomic_RNA"/>
</dbReference>
<dbReference type="EMBL" id="K02735">
    <property type="protein sequence ID" value="AAA46826.1"/>
    <property type="molecule type" value="Genomic_RNA"/>
</dbReference>
<dbReference type="EMBL" id="M16734">
    <property type="protein sequence ID" value="AAA46823.1"/>
    <property type="molecule type" value="Genomic_RNA"/>
</dbReference>
<dbReference type="PIR" id="A04150">
    <property type="entry name" value="VHXPNP"/>
</dbReference>
<dbReference type="PDB" id="3P4N">
    <property type="method" value="X-ray"/>
    <property type="resolution" value="2.50 A"/>
    <property type="chains" value="C/F=205-212"/>
</dbReference>
<dbReference type="PDBsum" id="3P4N"/>
<dbReference type="SMR" id="P03541"/>
<dbReference type="EvolutionaryTrace" id="P03541"/>
<dbReference type="Proteomes" id="UP000201514">
    <property type="component" value="Genome"/>
</dbReference>
<dbReference type="GO" id="GO:0019029">
    <property type="term" value="C:helical viral capsid"/>
    <property type="evidence" value="ECO:0007669"/>
    <property type="project" value="UniProtKB-UniRule"/>
</dbReference>
<dbReference type="GO" id="GO:0030430">
    <property type="term" value="C:host cell cytoplasm"/>
    <property type="evidence" value="ECO:0007669"/>
    <property type="project" value="UniProtKB-SubCell"/>
</dbReference>
<dbReference type="GO" id="GO:1990904">
    <property type="term" value="C:ribonucleoprotein complex"/>
    <property type="evidence" value="ECO:0007669"/>
    <property type="project" value="UniProtKB-KW"/>
</dbReference>
<dbReference type="GO" id="GO:0019013">
    <property type="term" value="C:viral nucleocapsid"/>
    <property type="evidence" value="ECO:0007669"/>
    <property type="project" value="UniProtKB-UniRule"/>
</dbReference>
<dbReference type="GO" id="GO:0016787">
    <property type="term" value="F:hydrolase activity"/>
    <property type="evidence" value="ECO:0007669"/>
    <property type="project" value="UniProtKB-KW"/>
</dbReference>
<dbReference type="GO" id="GO:0046872">
    <property type="term" value="F:metal ion binding"/>
    <property type="evidence" value="ECO:0007669"/>
    <property type="project" value="UniProtKB-UniRule"/>
</dbReference>
<dbReference type="GO" id="GO:0003723">
    <property type="term" value="F:RNA binding"/>
    <property type="evidence" value="ECO:0007669"/>
    <property type="project" value="UniProtKB-UniRule"/>
</dbReference>
<dbReference type="GO" id="GO:0039689">
    <property type="term" value="P:negative stranded viral RNA replication"/>
    <property type="evidence" value="ECO:0000250"/>
    <property type="project" value="UniProtKB"/>
</dbReference>
<dbReference type="GO" id="GO:0039696">
    <property type="term" value="P:RNA-templated viral transcription"/>
    <property type="evidence" value="ECO:0000250"/>
    <property type="project" value="UniProtKB"/>
</dbReference>
<dbReference type="GO" id="GO:0039724">
    <property type="term" value="P:symbiont-mediated suppression of host cytoplasmic pattern recognition receptor signaling pathway via inhibition of IKBKE activity"/>
    <property type="evidence" value="ECO:0007669"/>
    <property type="project" value="UniProtKB-UniRule"/>
</dbReference>
<dbReference type="FunFam" id="1.10.150.550:FF:000001">
    <property type="entry name" value="Nucleoprotein"/>
    <property type="match status" value="1"/>
</dbReference>
<dbReference type="FunFam" id="1.10.150.550:FF:000002">
    <property type="entry name" value="Nucleoprotein"/>
    <property type="match status" value="1"/>
</dbReference>
<dbReference type="FunFam" id="3.30.420.410:FF:000001">
    <property type="entry name" value="Nucleoprotein"/>
    <property type="match status" value="1"/>
</dbReference>
<dbReference type="Gene3D" id="3.30.420.410">
    <property type="entry name" value="Arenaviral nucleoprotein, C-terminal domain"/>
    <property type="match status" value="1"/>
</dbReference>
<dbReference type="Gene3D" id="1.10.150.550">
    <property type="entry name" value="Arenavirus nucleocapsid protein, head domain"/>
    <property type="match status" value="2"/>
</dbReference>
<dbReference type="HAMAP" id="MF_04085">
    <property type="entry name" value="ARENA_NCAP"/>
    <property type="match status" value="1"/>
</dbReference>
<dbReference type="InterPro" id="IPR000229">
    <property type="entry name" value="Nucleocapsid_arenaviridae"/>
</dbReference>
<dbReference type="InterPro" id="IPR035084">
    <property type="entry name" value="Nucleocapsid_C_arenaviridae"/>
</dbReference>
<dbReference type="InterPro" id="IPR038115">
    <property type="entry name" value="Nucleocapsid_C_sf"/>
</dbReference>
<dbReference type="InterPro" id="IPR035083">
    <property type="entry name" value="Nucleocapsid_N_arenaviridae"/>
</dbReference>
<dbReference type="Pfam" id="PF17290">
    <property type="entry name" value="Arena_ncap_C"/>
    <property type="match status" value="1"/>
</dbReference>
<dbReference type="Pfam" id="PF00843">
    <property type="entry name" value="Arena_nucleocap"/>
    <property type="match status" value="1"/>
</dbReference>
<dbReference type="PIRSF" id="PIRSF004029">
    <property type="entry name" value="N_ArenaV"/>
    <property type="match status" value="1"/>
</dbReference>
<feature type="chain" id="PRO_0000079196" description="Nucleoprotein">
    <location>
        <begin position="1"/>
        <end position="561"/>
    </location>
</feature>
<feature type="region of interest" description="Binding site for the cap structure m7GTP" evidence="1">
    <location>
        <begin position="52"/>
        <end position="237"/>
    </location>
</feature>
<feature type="region of interest" description="Disordered" evidence="2">
    <location>
        <begin position="336"/>
        <end position="355"/>
    </location>
</feature>
<feature type="binding site" evidence="1">
    <location>
        <position position="380"/>
    </location>
    <ligand>
        <name>Mn(2+)</name>
        <dbReference type="ChEBI" id="CHEBI:29035"/>
    </ligand>
</feature>
<feature type="binding site" evidence="1">
    <location>
        <position position="382"/>
    </location>
    <ligand>
        <name>Mn(2+)</name>
        <dbReference type="ChEBI" id="CHEBI:29035"/>
    </ligand>
</feature>
<feature type="binding site" evidence="1">
    <location>
        <position position="390"/>
    </location>
    <ligand>
        <name>Zn(2+)</name>
        <dbReference type="ChEBI" id="CHEBI:29105"/>
    </ligand>
</feature>
<feature type="binding site" evidence="1">
    <location>
        <position position="497"/>
    </location>
    <ligand>
        <name>Zn(2+)</name>
        <dbReference type="ChEBI" id="CHEBI:29105"/>
    </ligand>
</feature>
<feature type="binding site" evidence="1">
    <location>
        <position position="500"/>
    </location>
    <ligand>
        <name>Zn(2+)</name>
        <dbReference type="ChEBI" id="CHEBI:29105"/>
    </ligand>
</feature>
<feature type="binding site" evidence="1">
    <location>
        <position position="521"/>
    </location>
    <ligand>
        <name>Zn(2+)</name>
        <dbReference type="ChEBI" id="CHEBI:29105"/>
    </ligand>
</feature>
<feature type="binding site" evidence="1">
    <location>
        <position position="525"/>
    </location>
    <ligand>
        <name>Mn(2+)</name>
        <dbReference type="ChEBI" id="CHEBI:29035"/>
    </ligand>
</feature>
<feature type="site" description="Important for exonuclease activity" evidence="1">
    <location>
        <position position="457"/>
    </location>
</feature>
<feature type="sequence conflict" description="In Ref. 2; AAA46826." ref="2">
    <original>V</original>
    <variation>L</variation>
    <location>
        <position position="48"/>
    </location>
</feature>
<feature type="sequence conflict" description="In Ref. 2; AAA46826." ref="2">
    <original>G</original>
    <variation>A</variation>
    <location>
        <position position="258"/>
    </location>
</feature>
<gene>
    <name evidence="1" type="primary">N</name>
</gene>